<gene>
    <name evidence="1" type="primary">rpmA</name>
    <name type="ordered locus">Bcen2424_0582</name>
</gene>
<accession>A0K4A9</accession>
<sequence length="87" mass="9089">MAHKKAGGSSRNGRDSESKRLGVKVYGGQAINAGGIIVRQRGTRMHAGENVGMGKDHTLFALVDGHVKFATKGADKKHLVIVVPAAA</sequence>
<keyword id="KW-0687">Ribonucleoprotein</keyword>
<keyword id="KW-0689">Ribosomal protein</keyword>
<reference key="1">
    <citation type="submission" date="2006-08" db="EMBL/GenBank/DDBJ databases">
        <title>Complete sequence of chromosome 1 of Burkholderia cenocepacia HI2424.</title>
        <authorList>
            <person name="Copeland A."/>
            <person name="Lucas S."/>
            <person name="Lapidus A."/>
            <person name="Barry K."/>
            <person name="Detter J.C."/>
            <person name="Glavina del Rio T."/>
            <person name="Hammon N."/>
            <person name="Israni S."/>
            <person name="Pitluck S."/>
            <person name="Chain P."/>
            <person name="Malfatti S."/>
            <person name="Shin M."/>
            <person name="Vergez L."/>
            <person name="Schmutz J."/>
            <person name="Larimer F."/>
            <person name="Land M."/>
            <person name="Hauser L."/>
            <person name="Kyrpides N."/>
            <person name="Kim E."/>
            <person name="LiPuma J.J."/>
            <person name="Gonzalez C.F."/>
            <person name="Konstantinidis K."/>
            <person name="Tiedje J.M."/>
            <person name="Richardson P."/>
        </authorList>
    </citation>
    <scope>NUCLEOTIDE SEQUENCE [LARGE SCALE GENOMIC DNA]</scope>
    <source>
        <strain>HI2424</strain>
    </source>
</reference>
<protein>
    <recommendedName>
        <fullName evidence="1">Large ribosomal subunit protein bL27</fullName>
    </recommendedName>
    <alternativeName>
        <fullName evidence="3">50S ribosomal protein L27</fullName>
    </alternativeName>
</protein>
<evidence type="ECO:0000255" key="1">
    <source>
        <dbReference type="HAMAP-Rule" id="MF_00539"/>
    </source>
</evidence>
<evidence type="ECO:0000256" key="2">
    <source>
        <dbReference type="SAM" id="MobiDB-lite"/>
    </source>
</evidence>
<evidence type="ECO:0000305" key="3"/>
<name>RL27_BURCH</name>
<dbReference type="EMBL" id="CP000458">
    <property type="protein sequence ID" value="ABK07336.1"/>
    <property type="molecule type" value="Genomic_DNA"/>
</dbReference>
<dbReference type="RefSeq" id="WP_006476999.1">
    <property type="nucleotide sequence ID" value="NC_008542.1"/>
</dbReference>
<dbReference type="SMR" id="A0K4A9"/>
<dbReference type="GeneID" id="98106573"/>
<dbReference type="KEGG" id="bch:Bcen2424_0582"/>
<dbReference type="HOGENOM" id="CLU_095424_4_1_4"/>
<dbReference type="GO" id="GO:0022625">
    <property type="term" value="C:cytosolic large ribosomal subunit"/>
    <property type="evidence" value="ECO:0007669"/>
    <property type="project" value="TreeGrafter"/>
</dbReference>
<dbReference type="GO" id="GO:0003735">
    <property type="term" value="F:structural constituent of ribosome"/>
    <property type="evidence" value="ECO:0007669"/>
    <property type="project" value="InterPro"/>
</dbReference>
<dbReference type="GO" id="GO:0006412">
    <property type="term" value="P:translation"/>
    <property type="evidence" value="ECO:0007669"/>
    <property type="project" value="UniProtKB-UniRule"/>
</dbReference>
<dbReference type="FunFam" id="2.40.50.100:FF:000001">
    <property type="entry name" value="50S ribosomal protein L27"/>
    <property type="match status" value="1"/>
</dbReference>
<dbReference type="Gene3D" id="2.40.50.100">
    <property type="match status" value="1"/>
</dbReference>
<dbReference type="HAMAP" id="MF_00539">
    <property type="entry name" value="Ribosomal_bL27"/>
    <property type="match status" value="1"/>
</dbReference>
<dbReference type="InterPro" id="IPR001684">
    <property type="entry name" value="Ribosomal_bL27"/>
</dbReference>
<dbReference type="InterPro" id="IPR018261">
    <property type="entry name" value="Ribosomal_bL27_CS"/>
</dbReference>
<dbReference type="NCBIfam" id="TIGR00062">
    <property type="entry name" value="L27"/>
    <property type="match status" value="1"/>
</dbReference>
<dbReference type="PANTHER" id="PTHR15893:SF0">
    <property type="entry name" value="LARGE RIBOSOMAL SUBUNIT PROTEIN BL27M"/>
    <property type="match status" value="1"/>
</dbReference>
<dbReference type="PANTHER" id="PTHR15893">
    <property type="entry name" value="RIBOSOMAL PROTEIN L27"/>
    <property type="match status" value="1"/>
</dbReference>
<dbReference type="Pfam" id="PF01016">
    <property type="entry name" value="Ribosomal_L27"/>
    <property type="match status" value="1"/>
</dbReference>
<dbReference type="PRINTS" id="PR00063">
    <property type="entry name" value="RIBOSOMALL27"/>
</dbReference>
<dbReference type="SUPFAM" id="SSF110324">
    <property type="entry name" value="Ribosomal L27 protein-like"/>
    <property type="match status" value="1"/>
</dbReference>
<dbReference type="PROSITE" id="PS00831">
    <property type="entry name" value="RIBOSOMAL_L27"/>
    <property type="match status" value="1"/>
</dbReference>
<organism>
    <name type="scientific">Burkholderia cenocepacia (strain HI2424)</name>
    <dbReference type="NCBI Taxonomy" id="331272"/>
    <lineage>
        <taxon>Bacteria</taxon>
        <taxon>Pseudomonadati</taxon>
        <taxon>Pseudomonadota</taxon>
        <taxon>Betaproteobacteria</taxon>
        <taxon>Burkholderiales</taxon>
        <taxon>Burkholderiaceae</taxon>
        <taxon>Burkholderia</taxon>
        <taxon>Burkholderia cepacia complex</taxon>
    </lineage>
</organism>
<comment type="similarity">
    <text evidence="1">Belongs to the bacterial ribosomal protein bL27 family.</text>
</comment>
<feature type="chain" id="PRO_1000017427" description="Large ribosomal subunit protein bL27">
    <location>
        <begin position="1"/>
        <end position="87"/>
    </location>
</feature>
<feature type="region of interest" description="Disordered" evidence="2">
    <location>
        <begin position="1"/>
        <end position="21"/>
    </location>
</feature>
<proteinExistence type="inferred from homology"/>